<name>NFU1_DROYA</name>
<evidence type="ECO:0000250" key="1">
    <source>
        <dbReference type="UniProtKB" id="Q9UMS0"/>
    </source>
</evidence>
<evidence type="ECO:0000255" key="2"/>
<evidence type="ECO:0000305" key="3"/>
<evidence type="ECO:0000312" key="4">
    <source>
        <dbReference type="EMBL" id="EDX03113.1"/>
    </source>
</evidence>
<organism>
    <name type="scientific">Drosophila yakuba</name>
    <name type="common">Fruit fly</name>
    <dbReference type="NCBI Taxonomy" id="7245"/>
    <lineage>
        <taxon>Eukaryota</taxon>
        <taxon>Metazoa</taxon>
        <taxon>Ecdysozoa</taxon>
        <taxon>Arthropoda</taxon>
        <taxon>Hexapoda</taxon>
        <taxon>Insecta</taxon>
        <taxon>Pterygota</taxon>
        <taxon>Neoptera</taxon>
        <taxon>Endopterygota</taxon>
        <taxon>Diptera</taxon>
        <taxon>Brachycera</taxon>
        <taxon>Muscomorpha</taxon>
        <taxon>Ephydroidea</taxon>
        <taxon>Drosophilidae</taxon>
        <taxon>Drosophila</taxon>
        <taxon>Sophophora</taxon>
    </lineage>
</organism>
<dbReference type="EMBL" id="CM000162">
    <property type="protein sequence ID" value="EDX03113.1"/>
    <property type="molecule type" value="Genomic_DNA"/>
</dbReference>
<dbReference type="SMR" id="B4PZ52"/>
<dbReference type="EnsemblMetazoa" id="FBtr0261804">
    <property type="protein sequence ID" value="FBpp0260296"/>
    <property type="gene ID" value="FBgn0232872"/>
</dbReference>
<dbReference type="EnsemblMetazoa" id="XM_002101969.3">
    <property type="protein sequence ID" value="XP_002102005.1"/>
    <property type="gene ID" value="LOC6526196"/>
</dbReference>
<dbReference type="GeneID" id="6526196"/>
<dbReference type="KEGG" id="dya:Dyak_GE15286"/>
<dbReference type="eggNOG" id="KOG2358">
    <property type="taxonomic scope" value="Eukaryota"/>
</dbReference>
<dbReference type="HOGENOM" id="CLU_060555_0_2_1"/>
<dbReference type="OMA" id="AIMEHYM"/>
<dbReference type="OrthoDB" id="565552at2759"/>
<dbReference type="PhylomeDB" id="B4PZ52"/>
<dbReference type="Proteomes" id="UP000002282">
    <property type="component" value="Chromosome X"/>
</dbReference>
<dbReference type="GO" id="GO:0005739">
    <property type="term" value="C:mitochondrion"/>
    <property type="evidence" value="ECO:0007669"/>
    <property type="project" value="UniProtKB-SubCell"/>
</dbReference>
<dbReference type="GO" id="GO:0005506">
    <property type="term" value="F:iron ion binding"/>
    <property type="evidence" value="ECO:0007669"/>
    <property type="project" value="InterPro"/>
</dbReference>
<dbReference type="GO" id="GO:0051536">
    <property type="term" value="F:iron-sulfur cluster binding"/>
    <property type="evidence" value="ECO:0007669"/>
    <property type="project" value="UniProtKB-KW"/>
</dbReference>
<dbReference type="GO" id="GO:0016226">
    <property type="term" value="P:iron-sulfur cluster assembly"/>
    <property type="evidence" value="ECO:0007669"/>
    <property type="project" value="InterPro"/>
</dbReference>
<dbReference type="FunFam" id="3.30.300.130:FF:000001">
    <property type="entry name" value="NFU1 iron-sulfur cluster scaffold"/>
    <property type="match status" value="1"/>
</dbReference>
<dbReference type="FunFam" id="3.30.1370.70:FF:000002">
    <property type="entry name" value="NFU1 iron-sulfur cluster scaffold homolog, mitochondrial"/>
    <property type="match status" value="1"/>
</dbReference>
<dbReference type="Gene3D" id="3.30.300.130">
    <property type="entry name" value="Fe-S cluster assembly (FSCA)"/>
    <property type="match status" value="1"/>
</dbReference>
<dbReference type="Gene3D" id="3.30.1370.70">
    <property type="entry name" value="Scaffold protein Nfu/NifU, N-terminal domain"/>
    <property type="match status" value="1"/>
</dbReference>
<dbReference type="InterPro" id="IPR034904">
    <property type="entry name" value="FSCA_dom_sf"/>
</dbReference>
<dbReference type="InterPro" id="IPR014824">
    <property type="entry name" value="Nfu/NifU_N"/>
</dbReference>
<dbReference type="InterPro" id="IPR036498">
    <property type="entry name" value="Nfu/NifU_N_sf"/>
</dbReference>
<dbReference type="InterPro" id="IPR001075">
    <property type="entry name" value="NIF_FeS_clus_asmbl_NifU_C"/>
</dbReference>
<dbReference type="InterPro" id="IPR000629">
    <property type="entry name" value="RNA-helicase_DEAD-box_CS"/>
</dbReference>
<dbReference type="PANTHER" id="PTHR11178">
    <property type="entry name" value="IRON-SULFUR CLUSTER SCAFFOLD PROTEIN NFU-RELATED"/>
    <property type="match status" value="1"/>
</dbReference>
<dbReference type="PANTHER" id="PTHR11178:SF1">
    <property type="entry name" value="NFU1 IRON-SULFUR CLUSTER SCAFFOLD HOMOLOG, MITOCHONDRIAL"/>
    <property type="match status" value="1"/>
</dbReference>
<dbReference type="Pfam" id="PF08712">
    <property type="entry name" value="Nfu_N"/>
    <property type="match status" value="1"/>
</dbReference>
<dbReference type="Pfam" id="PF01106">
    <property type="entry name" value="NifU"/>
    <property type="match status" value="1"/>
</dbReference>
<dbReference type="SMART" id="SM00932">
    <property type="entry name" value="Nfu_N"/>
    <property type="match status" value="1"/>
</dbReference>
<dbReference type="SUPFAM" id="SSF117916">
    <property type="entry name" value="Fe-S cluster assembly (FSCA) domain-like"/>
    <property type="match status" value="1"/>
</dbReference>
<dbReference type="SUPFAM" id="SSF110836">
    <property type="entry name" value="Hypothetical protein SAV1430"/>
    <property type="match status" value="1"/>
</dbReference>
<gene>
    <name type="ORF">GE15286</name>
</gene>
<reference evidence="4" key="1">
    <citation type="journal article" date="2007" name="Nature">
        <title>Evolution of genes and genomes on the Drosophila phylogeny.</title>
        <authorList>
            <consortium name="Drosophila 12 genomes consortium"/>
        </authorList>
    </citation>
    <scope>NUCLEOTIDE SEQUENCE [LARGE SCALE GENOMIC DNA]</scope>
    <source>
        <strain evidence="4">Tai18E2 / Tucson 14021-0261.01</strain>
    </source>
</reference>
<sequence>MSKFLSQAALNTLRNTRLGSRQLVRSFAGIASTRNHSEPARQEEVYGQARGRSLLQMRMPVAGRRSMFIQTQDTPNPDSLKFLPGVDVLGKGNTYDFPNGTTAHSSPLAKLLFRVEGVKGVFFGADFVTISKQEGAEWSLIKPEVFAVIMDFFASGLPVLHDAQPNADTEILEDDDETVMMIKELLDTRIRPTVQEDGGDIVFMGYEAGVVKLKMQGSCSSCPSSIVTLKNGVQNMLQFYIPEVESVEQVFDEADRMVDSEFERFEKNLKTLKQQEPSGGGPQ</sequence>
<accession>B4PZ52</accession>
<keyword id="KW-0408">Iron</keyword>
<keyword id="KW-0411">Iron-sulfur</keyword>
<keyword id="KW-0479">Metal-binding</keyword>
<keyword id="KW-0496">Mitochondrion</keyword>
<keyword id="KW-0809">Transit peptide</keyword>
<comment type="function">
    <text evidence="1">Molecular scaffold for [Fe-S] cluster assembly of mitochondrial iron-sulfur proteins.</text>
</comment>
<comment type="subcellular location">
    <subcellularLocation>
        <location evidence="2">Mitochondrion</location>
    </subcellularLocation>
</comment>
<comment type="similarity">
    <text evidence="3">Belongs to the NifU family.</text>
</comment>
<proteinExistence type="inferred from homology"/>
<protein>
    <recommendedName>
        <fullName evidence="1">NFU1 iron-sulfur cluster scaffold homolog, mitochondrial</fullName>
    </recommendedName>
</protein>
<feature type="transit peptide" description="Mitochondrion" evidence="2">
    <location>
        <begin position="1"/>
        <end position="30"/>
    </location>
</feature>
<feature type="chain" id="PRO_0000388705" description="NFU1 iron-sulfur cluster scaffold homolog, mitochondrial" evidence="2">
    <location>
        <begin position="31"/>
        <end position="283"/>
    </location>
</feature>
<feature type="region of interest" description="NifU" evidence="2">
    <location>
        <begin position="182"/>
        <end position="250"/>
    </location>
</feature>
<feature type="binding site" evidence="1">
    <location>
        <position position="219"/>
    </location>
    <ligand>
        <name>[4Fe-4S] cluster</name>
        <dbReference type="ChEBI" id="CHEBI:49883"/>
        <note>ligand shared between dimeric partners</note>
    </ligand>
</feature>
<feature type="binding site" evidence="1">
    <location>
        <position position="222"/>
    </location>
    <ligand>
        <name>[4Fe-4S] cluster</name>
        <dbReference type="ChEBI" id="CHEBI:49883"/>
        <note>ligand shared between dimeric partners</note>
    </ligand>
</feature>